<feature type="chain" id="PRO_0000406771" description="Flagellar transcriptional regulator FlhD">
    <location>
        <begin position="1"/>
        <end position="106"/>
    </location>
</feature>
<feature type="disulfide bond" description="Interchain" evidence="1">
    <location>
        <position position="66"/>
    </location>
</feature>
<name>FLHD_BURMS</name>
<protein>
    <recommendedName>
        <fullName evidence="1">Flagellar transcriptional regulator FlhD</fullName>
    </recommendedName>
</protein>
<comment type="function">
    <text evidence="1">Functions in complex with FlhC as a master transcriptional regulator that regulates transcription of several flagellar and non-flagellar operons by binding to their promoter region. Activates expression of class 2 flagellar genes, including fliA, which is a flagellum-specific sigma factor that turns on the class 3 genes. Also regulates genes whose products function in a variety of physiological pathways.</text>
</comment>
<comment type="subunit">
    <text evidence="1">Homodimer; disulfide-linked. Forms a heterohexamer composed of two FlhC and four FlhD subunits. Each FlhC binds a FlhD dimer, forming a heterotrimer, and a hexamer assembles by dimerization of two heterotrimers.</text>
</comment>
<comment type="subcellular location">
    <subcellularLocation>
        <location evidence="1">Cytoplasm</location>
    </subcellularLocation>
</comment>
<comment type="domain">
    <text evidence="1">The C-terminal region contains a putative helix-turn-helix (HTH) motif, suggesting that this region may bind DNA.</text>
</comment>
<comment type="similarity">
    <text evidence="1">Belongs to the FlhD family.</text>
</comment>
<comment type="sequence caution" evidence="2">
    <conflict type="erroneous initiation">
        <sequence resource="EMBL-CDS" id="ABM49985"/>
    </conflict>
    <text>Extended N-terminus.</text>
</comment>
<accession>A1V915</accession>
<organism>
    <name type="scientific">Burkholderia mallei (strain SAVP1)</name>
    <dbReference type="NCBI Taxonomy" id="320388"/>
    <lineage>
        <taxon>Bacteria</taxon>
        <taxon>Pseudomonadati</taxon>
        <taxon>Pseudomonadota</taxon>
        <taxon>Betaproteobacteria</taxon>
        <taxon>Burkholderiales</taxon>
        <taxon>Burkholderiaceae</taxon>
        <taxon>Burkholderia</taxon>
        <taxon>pseudomallei group</taxon>
    </lineage>
</organism>
<sequence length="106" mass="11621">MSATSEMLAEINEVNLSYLLLAQRLLREDKAMGMFRMGISEELADVLVNLTLAQTVKLAASNQMLCRFRFDDHALLSSLADKGRSSAVSHAHSAILMAGQPVESLR</sequence>
<proteinExistence type="inferred from homology"/>
<gene>
    <name evidence="1" type="primary">flhD</name>
    <name type="ordered locus">BMASAVP1_A3440</name>
</gene>
<keyword id="KW-0010">Activator</keyword>
<keyword id="KW-1005">Bacterial flagellum biogenesis</keyword>
<keyword id="KW-0963">Cytoplasm</keyword>
<keyword id="KW-1015">Disulfide bond</keyword>
<keyword id="KW-0238">DNA-binding</keyword>
<keyword id="KW-0804">Transcription</keyword>
<keyword id="KW-0805">Transcription regulation</keyword>
<reference key="1">
    <citation type="journal article" date="2010" name="Genome Biol. Evol.">
        <title>Continuing evolution of Burkholderia mallei through genome reduction and large-scale rearrangements.</title>
        <authorList>
            <person name="Losada L."/>
            <person name="Ronning C.M."/>
            <person name="DeShazer D."/>
            <person name="Woods D."/>
            <person name="Fedorova N."/>
            <person name="Kim H.S."/>
            <person name="Shabalina S.A."/>
            <person name="Pearson T.R."/>
            <person name="Brinkac L."/>
            <person name="Tan P."/>
            <person name="Nandi T."/>
            <person name="Crabtree J."/>
            <person name="Badger J."/>
            <person name="Beckstrom-Sternberg S."/>
            <person name="Saqib M."/>
            <person name="Schutzer S.E."/>
            <person name="Keim P."/>
            <person name="Nierman W.C."/>
        </authorList>
    </citation>
    <scope>NUCLEOTIDE SEQUENCE [LARGE SCALE GENOMIC DNA]</scope>
    <source>
        <strain>SAVP1</strain>
    </source>
</reference>
<evidence type="ECO:0000255" key="1">
    <source>
        <dbReference type="HAMAP-Rule" id="MF_00725"/>
    </source>
</evidence>
<evidence type="ECO:0000305" key="2"/>
<dbReference type="EMBL" id="CP000526">
    <property type="protein sequence ID" value="ABM49985.1"/>
    <property type="status" value="ALT_INIT"/>
    <property type="molecule type" value="Genomic_DNA"/>
</dbReference>
<dbReference type="RefSeq" id="WP_004198199.1">
    <property type="nucleotide sequence ID" value="NC_008785.1"/>
</dbReference>
<dbReference type="SMR" id="A1V915"/>
<dbReference type="GeneID" id="93061932"/>
<dbReference type="KEGG" id="bmv:BMASAVP1_A3440"/>
<dbReference type="HOGENOM" id="CLU_1243395_0_0_4"/>
<dbReference type="GO" id="GO:0005737">
    <property type="term" value="C:cytoplasm"/>
    <property type="evidence" value="ECO:0007669"/>
    <property type="project" value="UniProtKB-SubCell"/>
</dbReference>
<dbReference type="GO" id="GO:0003677">
    <property type="term" value="F:DNA binding"/>
    <property type="evidence" value="ECO:0007669"/>
    <property type="project" value="UniProtKB-UniRule"/>
</dbReference>
<dbReference type="GO" id="GO:0044780">
    <property type="term" value="P:bacterial-type flagellum assembly"/>
    <property type="evidence" value="ECO:0007669"/>
    <property type="project" value="InterPro"/>
</dbReference>
<dbReference type="GO" id="GO:0045893">
    <property type="term" value="P:positive regulation of DNA-templated transcription"/>
    <property type="evidence" value="ECO:0007669"/>
    <property type="project" value="InterPro"/>
</dbReference>
<dbReference type="GO" id="GO:1902208">
    <property type="term" value="P:regulation of bacterial-type flagellum assembly"/>
    <property type="evidence" value="ECO:0007669"/>
    <property type="project" value="UniProtKB-UniRule"/>
</dbReference>
<dbReference type="Gene3D" id="1.10.4000.10">
    <property type="entry name" value="Flagellar transcriptional activator FlhD"/>
    <property type="match status" value="1"/>
</dbReference>
<dbReference type="HAMAP" id="MF_00725">
    <property type="entry name" value="FlhD"/>
    <property type="match status" value="1"/>
</dbReference>
<dbReference type="InterPro" id="IPR023559">
    <property type="entry name" value="Flagellar_FlhD"/>
</dbReference>
<dbReference type="InterPro" id="IPR036194">
    <property type="entry name" value="FlhD_sf"/>
</dbReference>
<dbReference type="NCBIfam" id="NF002783">
    <property type="entry name" value="PRK02909.1-1"/>
    <property type="match status" value="1"/>
</dbReference>
<dbReference type="Pfam" id="PF05247">
    <property type="entry name" value="FlhD"/>
    <property type="match status" value="1"/>
</dbReference>
<dbReference type="SUPFAM" id="SSF63592">
    <property type="entry name" value="Flagellar transcriptional activator FlhD"/>
    <property type="match status" value="1"/>
</dbReference>